<keyword id="KW-0143">Chaperone</keyword>
<keyword id="KW-0963">Cytoplasm</keyword>
<keyword id="KW-0235">DNA replication</keyword>
<keyword id="KW-0479">Metal-binding</keyword>
<keyword id="KW-0677">Repeat</keyword>
<keyword id="KW-0346">Stress response</keyword>
<keyword id="KW-0862">Zinc</keyword>
<keyword id="KW-0863">Zinc-finger</keyword>
<proteinExistence type="inferred from homology"/>
<name>DNAJ_RHIR8</name>
<sequence length="382" mass="41382">MAKADYYETLGVSRTADEKELKSAFRKLAMQFHPDKNPDDNDAERKFKEINEAYETLKDPNKRAAYDRYGHAAFEHGGMGGGGFGGGGFGGGGGFSDIFEDIFGEMMGGGRGRARSSGGRERGADLRYNMEISLEEAFTGKTAQIRVPTSITCDVCSGSGAKPGTQPKTCGTCQGSGRVRAAQGFFSVERTCPTCHGRGQTIPDPCGKCHGQGRITEERSLSVNIPSGIEDGTRIRLQGEGEAGTRGGPSGDLYIFLSVKPHEFFQRDGADLYCAVPISMTTAALGGTFDVATLDGTKSRVTVPEGTQVGKQFRLKAKGMPVLRSSQVGDLYIQIQIETPQKLTKRQRELLQEFEQISSKDNNPESTGFFARMKDFFDTFSD</sequence>
<organism>
    <name type="scientific">Rhizobium rhizogenes (strain K84 / ATCC BAA-868)</name>
    <name type="common">Agrobacterium radiobacter</name>
    <dbReference type="NCBI Taxonomy" id="311403"/>
    <lineage>
        <taxon>Bacteria</taxon>
        <taxon>Pseudomonadati</taxon>
        <taxon>Pseudomonadota</taxon>
        <taxon>Alphaproteobacteria</taxon>
        <taxon>Hyphomicrobiales</taxon>
        <taxon>Rhizobiaceae</taxon>
        <taxon>Rhizobium/Agrobacterium group</taxon>
        <taxon>Rhizobium</taxon>
    </lineage>
</organism>
<feature type="chain" id="PRO_1000164234" description="Chaperone protein DnaJ">
    <location>
        <begin position="1"/>
        <end position="382"/>
    </location>
</feature>
<feature type="domain" description="J" evidence="1">
    <location>
        <begin position="5"/>
        <end position="70"/>
    </location>
</feature>
<feature type="repeat" description="CXXCXGXG motif">
    <location>
        <begin position="153"/>
        <end position="160"/>
    </location>
</feature>
<feature type="repeat" description="CXXCXGXG motif">
    <location>
        <begin position="170"/>
        <end position="177"/>
    </location>
</feature>
<feature type="repeat" description="CXXCXGXG motif">
    <location>
        <begin position="192"/>
        <end position="199"/>
    </location>
</feature>
<feature type="repeat" description="CXXCXGXG motif">
    <location>
        <begin position="206"/>
        <end position="213"/>
    </location>
</feature>
<feature type="zinc finger region" description="CR-type" evidence="1">
    <location>
        <begin position="140"/>
        <end position="218"/>
    </location>
</feature>
<feature type="binding site" evidence="1">
    <location>
        <position position="153"/>
    </location>
    <ligand>
        <name>Zn(2+)</name>
        <dbReference type="ChEBI" id="CHEBI:29105"/>
        <label>1</label>
    </ligand>
</feature>
<feature type="binding site" evidence="1">
    <location>
        <position position="156"/>
    </location>
    <ligand>
        <name>Zn(2+)</name>
        <dbReference type="ChEBI" id="CHEBI:29105"/>
        <label>1</label>
    </ligand>
</feature>
<feature type="binding site" evidence="1">
    <location>
        <position position="170"/>
    </location>
    <ligand>
        <name>Zn(2+)</name>
        <dbReference type="ChEBI" id="CHEBI:29105"/>
        <label>2</label>
    </ligand>
</feature>
<feature type="binding site" evidence="1">
    <location>
        <position position="173"/>
    </location>
    <ligand>
        <name>Zn(2+)</name>
        <dbReference type="ChEBI" id="CHEBI:29105"/>
        <label>2</label>
    </ligand>
</feature>
<feature type="binding site" evidence="1">
    <location>
        <position position="192"/>
    </location>
    <ligand>
        <name>Zn(2+)</name>
        <dbReference type="ChEBI" id="CHEBI:29105"/>
        <label>2</label>
    </ligand>
</feature>
<feature type="binding site" evidence="1">
    <location>
        <position position="195"/>
    </location>
    <ligand>
        <name>Zn(2+)</name>
        <dbReference type="ChEBI" id="CHEBI:29105"/>
        <label>2</label>
    </ligand>
</feature>
<feature type="binding site" evidence="1">
    <location>
        <position position="206"/>
    </location>
    <ligand>
        <name>Zn(2+)</name>
        <dbReference type="ChEBI" id="CHEBI:29105"/>
        <label>1</label>
    </ligand>
</feature>
<feature type="binding site" evidence="1">
    <location>
        <position position="209"/>
    </location>
    <ligand>
        <name>Zn(2+)</name>
        <dbReference type="ChEBI" id="CHEBI:29105"/>
        <label>1</label>
    </ligand>
</feature>
<protein>
    <recommendedName>
        <fullName evidence="1">Chaperone protein DnaJ</fullName>
    </recommendedName>
</protein>
<reference key="1">
    <citation type="journal article" date="2009" name="J. Bacteriol.">
        <title>Genome sequences of three Agrobacterium biovars help elucidate the evolution of multichromosome genomes in bacteria.</title>
        <authorList>
            <person name="Slater S.C."/>
            <person name="Goldman B.S."/>
            <person name="Goodner B."/>
            <person name="Setubal J.C."/>
            <person name="Farrand S.K."/>
            <person name="Nester E.W."/>
            <person name="Burr T.J."/>
            <person name="Banta L."/>
            <person name="Dickerman A.W."/>
            <person name="Paulsen I."/>
            <person name="Otten L."/>
            <person name="Suen G."/>
            <person name="Welch R."/>
            <person name="Almeida N.F."/>
            <person name="Arnold F."/>
            <person name="Burton O.T."/>
            <person name="Du Z."/>
            <person name="Ewing A."/>
            <person name="Godsy E."/>
            <person name="Heisel S."/>
            <person name="Houmiel K.L."/>
            <person name="Jhaveri J."/>
            <person name="Lu J."/>
            <person name="Miller N.M."/>
            <person name="Norton S."/>
            <person name="Chen Q."/>
            <person name="Phoolcharoen W."/>
            <person name="Ohlin V."/>
            <person name="Ondrusek D."/>
            <person name="Pride N."/>
            <person name="Stricklin S.L."/>
            <person name="Sun J."/>
            <person name="Wheeler C."/>
            <person name="Wilson L."/>
            <person name="Zhu H."/>
            <person name="Wood D.W."/>
        </authorList>
    </citation>
    <scope>NUCLEOTIDE SEQUENCE [LARGE SCALE GENOMIC DNA]</scope>
    <source>
        <strain>K84 / ATCC BAA-868</strain>
    </source>
</reference>
<accession>B9JGW2</accession>
<gene>
    <name evidence="1" type="primary">dnaJ</name>
    <name type="ordered locus">Arad_0210</name>
</gene>
<evidence type="ECO:0000255" key="1">
    <source>
        <dbReference type="HAMAP-Rule" id="MF_01152"/>
    </source>
</evidence>
<comment type="function">
    <text evidence="1">Participates actively in the response to hyperosmotic and heat shock by preventing the aggregation of stress-denatured proteins and by disaggregating proteins, also in an autonomous, DnaK-independent fashion. Unfolded proteins bind initially to DnaJ; upon interaction with the DnaJ-bound protein, DnaK hydrolyzes its bound ATP, resulting in the formation of a stable complex. GrpE releases ADP from DnaK; ATP binding to DnaK triggers the release of the substrate protein, thus completing the reaction cycle. Several rounds of ATP-dependent interactions between DnaJ, DnaK and GrpE are required for fully efficient folding. Also involved, together with DnaK and GrpE, in the DNA replication of plasmids through activation of initiation proteins.</text>
</comment>
<comment type="cofactor">
    <cofactor evidence="1">
        <name>Zn(2+)</name>
        <dbReference type="ChEBI" id="CHEBI:29105"/>
    </cofactor>
    <text evidence="1">Binds 2 Zn(2+) ions per monomer.</text>
</comment>
<comment type="subunit">
    <text evidence="1">Homodimer.</text>
</comment>
<comment type="subcellular location">
    <subcellularLocation>
        <location evidence="1">Cytoplasm</location>
    </subcellularLocation>
</comment>
<comment type="domain">
    <text evidence="1">The J domain is necessary and sufficient to stimulate DnaK ATPase activity. Zinc center 1 plays an important role in the autonomous, DnaK-independent chaperone activity of DnaJ. Zinc center 2 is essential for interaction with DnaK and for DnaJ activity.</text>
</comment>
<comment type="similarity">
    <text evidence="1">Belongs to the DnaJ family.</text>
</comment>
<dbReference type="EMBL" id="CP000628">
    <property type="protein sequence ID" value="ACM24958.1"/>
    <property type="molecule type" value="Genomic_DNA"/>
</dbReference>
<dbReference type="RefSeq" id="WP_007690240.1">
    <property type="nucleotide sequence ID" value="NC_011985.1"/>
</dbReference>
<dbReference type="SMR" id="B9JGW2"/>
<dbReference type="STRING" id="311403.Arad_0210"/>
<dbReference type="GeneID" id="86850593"/>
<dbReference type="KEGG" id="ara:Arad_0210"/>
<dbReference type="eggNOG" id="COG0484">
    <property type="taxonomic scope" value="Bacteria"/>
</dbReference>
<dbReference type="HOGENOM" id="CLU_017633_0_7_5"/>
<dbReference type="Proteomes" id="UP000001600">
    <property type="component" value="Chromosome 1"/>
</dbReference>
<dbReference type="GO" id="GO:0005737">
    <property type="term" value="C:cytoplasm"/>
    <property type="evidence" value="ECO:0007669"/>
    <property type="project" value="UniProtKB-SubCell"/>
</dbReference>
<dbReference type="GO" id="GO:0005524">
    <property type="term" value="F:ATP binding"/>
    <property type="evidence" value="ECO:0007669"/>
    <property type="project" value="InterPro"/>
</dbReference>
<dbReference type="GO" id="GO:0031072">
    <property type="term" value="F:heat shock protein binding"/>
    <property type="evidence" value="ECO:0007669"/>
    <property type="project" value="InterPro"/>
</dbReference>
<dbReference type="GO" id="GO:0051082">
    <property type="term" value="F:unfolded protein binding"/>
    <property type="evidence" value="ECO:0007669"/>
    <property type="project" value="UniProtKB-UniRule"/>
</dbReference>
<dbReference type="GO" id="GO:0008270">
    <property type="term" value="F:zinc ion binding"/>
    <property type="evidence" value="ECO:0007669"/>
    <property type="project" value="UniProtKB-UniRule"/>
</dbReference>
<dbReference type="GO" id="GO:0051085">
    <property type="term" value="P:chaperone cofactor-dependent protein refolding"/>
    <property type="evidence" value="ECO:0007669"/>
    <property type="project" value="TreeGrafter"/>
</dbReference>
<dbReference type="GO" id="GO:0006260">
    <property type="term" value="P:DNA replication"/>
    <property type="evidence" value="ECO:0007669"/>
    <property type="project" value="UniProtKB-KW"/>
</dbReference>
<dbReference type="GO" id="GO:0042026">
    <property type="term" value="P:protein refolding"/>
    <property type="evidence" value="ECO:0007669"/>
    <property type="project" value="TreeGrafter"/>
</dbReference>
<dbReference type="GO" id="GO:0009408">
    <property type="term" value="P:response to heat"/>
    <property type="evidence" value="ECO:0007669"/>
    <property type="project" value="InterPro"/>
</dbReference>
<dbReference type="CDD" id="cd06257">
    <property type="entry name" value="DnaJ"/>
    <property type="match status" value="1"/>
</dbReference>
<dbReference type="CDD" id="cd10747">
    <property type="entry name" value="DnaJ_C"/>
    <property type="match status" value="1"/>
</dbReference>
<dbReference type="CDD" id="cd10719">
    <property type="entry name" value="DnaJ_zf"/>
    <property type="match status" value="1"/>
</dbReference>
<dbReference type="FunFam" id="1.10.287.110:FF:000034">
    <property type="entry name" value="Chaperone protein DnaJ"/>
    <property type="match status" value="1"/>
</dbReference>
<dbReference type="FunFam" id="2.10.230.10:FF:000002">
    <property type="entry name" value="Molecular chaperone DnaJ"/>
    <property type="match status" value="1"/>
</dbReference>
<dbReference type="FunFam" id="2.60.260.20:FF:000004">
    <property type="entry name" value="Molecular chaperone DnaJ"/>
    <property type="match status" value="1"/>
</dbReference>
<dbReference type="Gene3D" id="1.10.287.110">
    <property type="entry name" value="DnaJ domain"/>
    <property type="match status" value="1"/>
</dbReference>
<dbReference type="Gene3D" id="2.10.230.10">
    <property type="entry name" value="Heat shock protein DnaJ, cysteine-rich domain"/>
    <property type="match status" value="1"/>
</dbReference>
<dbReference type="Gene3D" id="2.60.260.20">
    <property type="entry name" value="Urease metallochaperone UreE, N-terminal domain"/>
    <property type="match status" value="2"/>
</dbReference>
<dbReference type="HAMAP" id="MF_01152">
    <property type="entry name" value="DnaJ"/>
    <property type="match status" value="1"/>
</dbReference>
<dbReference type="InterPro" id="IPR012724">
    <property type="entry name" value="DnaJ"/>
</dbReference>
<dbReference type="InterPro" id="IPR002939">
    <property type="entry name" value="DnaJ_C"/>
</dbReference>
<dbReference type="InterPro" id="IPR001623">
    <property type="entry name" value="DnaJ_domain"/>
</dbReference>
<dbReference type="InterPro" id="IPR018253">
    <property type="entry name" value="DnaJ_domain_CS"/>
</dbReference>
<dbReference type="InterPro" id="IPR008971">
    <property type="entry name" value="HSP40/DnaJ_pept-bd"/>
</dbReference>
<dbReference type="InterPro" id="IPR001305">
    <property type="entry name" value="HSP_DnaJ_Cys-rich_dom"/>
</dbReference>
<dbReference type="InterPro" id="IPR036410">
    <property type="entry name" value="HSP_DnaJ_Cys-rich_dom_sf"/>
</dbReference>
<dbReference type="InterPro" id="IPR036869">
    <property type="entry name" value="J_dom_sf"/>
</dbReference>
<dbReference type="NCBIfam" id="TIGR02349">
    <property type="entry name" value="DnaJ_bact"/>
    <property type="match status" value="1"/>
</dbReference>
<dbReference type="NCBIfam" id="NF008035">
    <property type="entry name" value="PRK10767.1"/>
    <property type="match status" value="1"/>
</dbReference>
<dbReference type="PANTHER" id="PTHR43096:SF48">
    <property type="entry name" value="CHAPERONE PROTEIN DNAJ"/>
    <property type="match status" value="1"/>
</dbReference>
<dbReference type="PANTHER" id="PTHR43096">
    <property type="entry name" value="DNAJ HOMOLOG 1, MITOCHONDRIAL-RELATED"/>
    <property type="match status" value="1"/>
</dbReference>
<dbReference type="Pfam" id="PF00226">
    <property type="entry name" value="DnaJ"/>
    <property type="match status" value="1"/>
</dbReference>
<dbReference type="Pfam" id="PF01556">
    <property type="entry name" value="DnaJ_C"/>
    <property type="match status" value="1"/>
</dbReference>
<dbReference type="Pfam" id="PF00684">
    <property type="entry name" value="DnaJ_CXXCXGXG"/>
    <property type="match status" value="1"/>
</dbReference>
<dbReference type="PRINTS" id="PR00625">
    <property type="entry name" value="JDOMAIN"/>
</dbReference>
<dbReference type="SMART" id="SM00271">
    <property type="entry name" value="DnaJ"/>
    <property type="match status" value="1"/>
</dbReference>
<dbReference type="SUPFAM" id="SSF46565">
    <property type="entry name" value="Chaperone J-domain"/>
    <property type="match status" value="1"/>
</dbReference>
<dbReference type="SUPFAM" id="SSF57938">
    <property type="entry name" value="DnaJ/Hsp40 cysteine-rich domain"/>
    <property type="match status" value="1"/>
</dbReference>
<dbReference type="SUPFAM" id="SSF49493">
    <property type="entry name" value="HSP40/DnaJ peptide-binding domain"/>
    <property type="match status" value="2"/>
</dbReference>
<dbReference type="PROSITE" id="PS00636">
    <property type="entry name" value="DNAJ_1"/>
    <property type="match status" value="1"/>
</dbReference>
<dbReference type="PROSITE" id="PS50076">
    <property type="entry name" value="DNAJ_2"/>
    <property type="match status" value="1"/>
</dbReference>
<dbReference type="PROSITE" id="PS51188">
    <property type="entry name" value="ZF_CR"/>
    <property type="match status" value="1"/>
</dbReference>